<proteinExistence type="evidence at protein level"/>
<evidence type="ECO:0000269" key="1">
    <source ref="1"/>
</evidence>
<evidence type="ECO:0000303" key="2">
    <source ref="1"/>
</evidence>
<evidence type="ECO:0000305" key="3"/>
<sequence length="9" mass="1087">IIDFIPQIE</sequence>
<organism>
    <name type="scientific">Brotheas amazonicus</name>
    <name type="common">Scorpion</name>
    <dbReference type="NCBI Taxonomy" id="662117"/>
    <lineage>
        <taxon>Eukaryota</taxon>
        <taxon>Metazoa</taxon>
        <taxon>Ecdysozoa</taxon>
        <taxon>Arthropoda</taxon>
        <taxon>Chelicerata</taxon>
        <taxon>Arachnida</taxon>
        <taxon>Scorpiones</taxon>
        <taxon>Iurida</taxon>
        <taxon>Chactoidea</taxon>
        <taxon>Chactidae</taxon>
        <taxon>Brotheinae</taxon>
        <taxon>Brotheini</taxon>
        <taxon>Brotheina</taxon>
        <taxon>Brotheas</taxon>
    </lineage>
</organism>
<reference evidence="3" key="1">
    <citation type="submission" date="2009-07" db="UniProtKB">
        <title>Brazilian scorpion Brotheas amazonicus venom peptidomics.</title>
        <authorList>
            <person name="Ireno I.C."/>
            <person name="Rates B.A."/>
            <person name="Pimenta A.M.C."/>
        </authorList>
    </citation>
    <scope>PROTEIN SEQUENCE</scope>
    <scope>SUBCELLULAR LOCATION</scope>
    <scope>TISSUE SPECIFICITY</scope>
    <source>
        <tissue evidence="1">Venom</tissue>
    </source>
</reference>
<name>VP4_BROAA</name>
<dbReference type="GO" id="GO:0005576">
    <property type="term" value="C:extracellular region"/>
    <property type="evidence" value="ECO:0007669"/>
    <property type="project" value="UniProtKB-SubCell"/>
</dbReference>
<keyword id="KW-0903">Direct protein sequencing</keyword>
<keyword id="KW-0964">Secreted</keyword>
<feature type="peptide" id="PRO_0000383657" description="Venom peptide 4" evidence="1">
    <location>
        <begin position="1" status="less than"/>
        <end position="9" status="greater than"/>
    </location>
</feature>
<feature type="non-terminal residue" evidence="2">
    <location>
        <position position="1"/>
    </location>
</feature>
<feature type="non-terminal residue" evidence="2">
    <location>
        <position position="9"/>
    </location>
</feature>
<protein>
    <recommendedName>
        <fullName evidence="2">Venom peptide 4</fullName>
    </recommendedName>
    <alternativeName>
        <fullName evidence="2">BaP-4</fullName>
    </alternativeName>
</protein>
<comment type="subcellular location">
    <subcellularLocation>
        <location evidence="1">Secreted</location>
    </subcellularLocation>
</comment>
<comment type="tissue specificity">
    <text evidence="1">Expressed by the venom gland.</text>
</comment>
<accession>P86339</accession>